<name>PSBN_NOSP7</name>
<reference key="1">
    <citation type="journal article" date="2013" name="Plant Physiol.">
        <title>A Nostoc punctiforme Sugar Transporter Necessary to Establish a Cyanobacterium-Plant Symbiosis.</title>
        <authorList>
            <person name="Ekman M."/>
            <person name="Picossi S."/>
            <person name="Campbell E.L."/>
            <person name="Meeks J.C."/>
            <person name="Flores E."/>
        </authorList>
    </citation>
    <scope>NUCLEOTIDE SEQUENCE [LARGE SCALE GENOMIC DNA]</scope>
    <source>
        <strain>ATCC 29133 / PCC 73102</strain>
    </source>
</reference>
<dbReference type="EMBL" id="CP001037">
    <property type="protein sequence ID" value="ACC82689.1"/>
    <property type="molecule type" value="Genomic_DNA"/>
</dbReference>
<dbReference type="STRING" id="63737.Npun_R4314"/>
<dbReference type="EnsemblBacteria" id="ACC82689">
    <property type="protein sequence ID" value="ACC82689"/>
    <property type="gene ID" value="Npun_R4314"/>
</dbReference>
<dbReference type="KEGG" id="npu:Npun_R4314"/>
<dbReference type="eggNOG" id="ENOG50339MH">
    <property type="taxonomic scope" value="Bacteria"/>
</dbReference>
<dbReference type="HOGENOM" id="CLU_205504_0_0_3"/>
<dbReference type="OrthoDB" id="532561at2"/>
<dbReference type="PhylomeDB" id="B2JA12"/>
<dbReference type="Proteomes" id="UP000001191">
    <property type="component" value="Chromosome"/>
</dbReference>
<dbReference type="GO" id="GO:0031676">
    <property type="term" value="C:plasma membrane-derived thylakoid membrane"/>
    <property type="evidence" value="ECO:0007669"/>
    <property type="project" value="UniProtKB-SubCell"/>
</dbReference>
<dbReference type="GO" id="GO:0015979">
    <property type="term" value="P:photosynthesis"/>
    <property type="evidence" value="ECO:0007669"/>
    <property type="project" value="InterPro"/>
</dbReference>
<dbReference type="HAMAP" id="MF_00293">
    <property type="entry name" value="PSII_PsbN"/>
    <property type="match status" value="1"/>
</dbReference>
<dbReference type="InterPro" id="IPR003398">
    <property type="entry name" value="PSII_PsbN"/>
</dbReference>
<dbReference type="NCBIfam" id="NF009650">
    <property type="entry name" value="PRK13183.1"/>
    <property type="match status" value="1"/>
</dbReference>
<dbReference type="PANTHER" id="PTHR35326">
    <property type="entry name" value="PROTEIN PSBN"/>
    <property type="match status" value="1"/>
</dbReference>
<dbReference type="PANTHER" id="PTHR35326:SF3">
    <property type="entry name" value="PROTEIN PSBN"/>
    <property type="match status" value="1"/>
</dbReference>
<dbReference type="Pfam" id="PF02468">
    <property type="entry name" value="PsbN"/>
    <property type="match status" value="1"/>
</dbReference>
<comment type="function">
    <text evidence="1">May play a role in photosystem I and II biogenesis.</text>
</comment>
<comment type="subcellular location">
    <subcellularLocation>
        <location evidence="1">Cellular thylakoid membrane</location>
        <topology evidence="1">Single-pass membrane protein</topology>
    </subcellularLocation>
</comment>
<comment type="similarity">
    <text evidence="1">Belongs to the PsbN family.</text>
</comment>
<comment type="caution">
    <text evidence="1">Originally thought to be a component of PSII; based on experiments in Synechocystis, N.tabacum and barley, and its absence from PSII in T.elongatus and T.vulcanus, this is probably not true.</text>
</comment>
<gene>
    <name evidence="1" type="primary">psbN</name>
    <name type="ordered locus">Npun_R4314</name>
</gene>
<accession>B2JA12</accession>
<sequence length="43" mass="4578">MEPAIVLSISMAAVVVAITGISIYTSFGPPSKELNDPFDDHED</sequence>
<organism>
    <name type="scientific">Nostoc punctiforme (strain ATCC 29133 / PCC 73102)</name>
    <dbReference type="NCBI Taxonomy" id="63737"/>
    <lineage>
        <taxon>Bacteria</taxon>
        <taxon>Bacillati</taxon>
        <taxon>Cyanobacteriota</taxon>
        <taxon>Cyanophyceae</taxon>
        <taxon>Nostocales</taxon>
        <taxon>Nostocaceae</taxon>
        <taxon>Nostoc</taxon>
    </lineage>
</organism>
<evidence type="ECO:0000255" key="1">
    <source>
        <dbReference type="HAMAP-Rule" id="MF_00293"/>
    </source>
</evidence>
<proteinExistence type="inferred from homology"/>
<keyword id="KW-0472">Membrane</keyword>
<keyword id="KW-1185">Reference proteome</keyword>
<keyword id="KW-0793">Thylakoid</keyword>
<keyword id="KW-0812">Transmembrane</keyword>
<keyword id="KW-1133">Transmembrane helix</keyword>
<feature type="chain" id="PRO_1000115088" description="Protein PsbN">
    <location>
        <begin position="1"/>
        <end position="43"/>
    </location>
</feature>
<feature type="transmembrane region" description="Helical" evidence="1">
    <location>
        <begin position="4"/>
        <end position="24"/>
    </location>
</feature>
<protein>
    <recommendedName>
        <fullName evidence="1">Protein PsbN</fullName>
    </recommendedName>
</protein>